<keyword id="KW-0687">Ribonucleoprotein</keyword>
<keyword id="KW-0689">Ribosomal protein</keyword>
<keyword id="KW-0694">RNA-binding</keyword>
<keyword id="KW-0699">rRNA-binding</keyword>
<reference key="1">
    <citation type="journal article" date="2009" name="Infect. Immun.">
        <title>Comparative genomics reveal extensive transposon-mediated genomic plasticity and diversity among potential effector proteins within the genus Coxiella.</title>
        <authorList>
            <person name="Beare P.A."/>
            <person name="Unsworth N."/>
            <person name="Andoh M."/>
            <person name="Voth D.E."/>
            <person name="Omsland A."/>
            <person name="Gilk S.D."/>
            <person name="Williams K.P."/>
            <person name="Sobral B.W."/>
            <person name="Kupko J.J. III"/>
            <person name="Porcella S.F."/>
            <person name="Samuel J.E."/>
            <person name="Heinzen R.A."/>
        </authorList>
    </citation>
    <scope>NUCLEOTIDE SEQUENCE [LARGE SCALE GENOMIC DNA]</scope>
    <source>
        <strain>CbuK_Q154</strain>
    </source>
</reference>
<evidence type="ECO:0000255" key="1">
    <source>
        <dbReference type="HAMAP-Rule" id="MF_01306"/>
    </source>
</evidence>
<evidence type="ECO:0000305" key="2"/>
<feature type="chain" id="PRO_1000140712" description="Small ribosomal subunit protein uS4">
    <location>
        <begin position="1"/>
        <end position="206"/>
    </location>
</feature>
<feature type="domain" description="S4 RNA-binding" evidence="1">
    <location>
        <begin position="96"/>
        <end position="158"/>
    </location>
</feature>
<gene>
    <name evidence="1" type="primary">rpsD</name>
    <name type="ordered locus">CbuK_0457</name>
</gene>
<comment type="function">
    <text evidence="1">One of the primary rRNA binding proteins, it binds directly to 16S rRNA where it nucleates assembly of the body of the 30S subunit.</text>
</comment>
<comment type="function">
    <text evidence="1">With S5 and S12 plays an important role in translational accuracy.</text>
</comment>
<comment type="subunit">
    <text evidence="1">Part of the 30S ribosomal subunit. Contacts protein S5. The interaction surface between S4 and S5 is involved in control of translational fidelity.</text>
</comment>
<comment type="similarity">
    <text evidence="1">Belongs to the universal ribosomal protein uS4 family.</text>
</comment>
<protein>
    <recommendedName>
        <fullName evidence="1">Small ribosomal subunit protein uS4</fullName>
    </recommendedName>
    <alternativeName>
        <fullName evidence="2">30S ribosomal protein S4</fullName>
    </alternativeName>
</protein>
<sequence>MARYLGPKCRLSRREKTDLQLKSGIRAIDSKCNIERIPGMHWQRRGRTTDYGVQLRMKQMIKRYYDVLEKQFANYYKQADRLKGSTGDNLLKLLESRLDNVVYRMGFSATRAEARQLISHKAILVNGEVVNIPSYQVKPGDIIEVRSRAKGQLRIKGALELAQQRAPISWIEVDTKKMTGTFKEQPDVAELPAEFKVNLVVELYSK</sequence>
<accession>B6J5F6</accession>
<proteinExistence type="inferred from homology"/>
<dbReference type="EMBL" id="CP001020">
    <property type="protein sequence ID" value="ACJ19740.1"/>
    <property type="molecule type" value="Genomic_DNA"/>
</dbReference>
<dbReference type="RefSeq" id="WP_012570655.1">
    <property type="nucleotide sequence ID" value="NC_011528.1"/>
</dbReference>
<dbReference type="SMR" id="B6J5F6"/>
<dbReference type="KEGG" id="cbc:CbuK_0457"/>
<dbReference type="HOGENOM" id="CLU_092403_0_2_6"/>
<dbReference type="GO" id="GO:0015935">
    <property type="term" value="C:small ribosomal subunit"/>
    <property type="evidence" value="ECO:0007669"/>
    <property type="project" value="InterPro"/>
</dbReference>
<dbReference type="GO" id="GO:0019843">
    <property type="term" value="F:rRNA binding"/>
    <property type="evidence" value="ECO:0007669"/>
    <property type="project" value="UniProtKB-UniRule"/>
</dbReference>
<dbReference type="GO" id="GO:0003735">
    <property type="term" value="F:structural constituent of ribosome"/>
    <property type="evidence" value="ECO:0007669"/>
    <property type="project" value="InterPro"/>
</dbReference>
<dbReference type="GO" id="GO:0042274">
    <property type="term" value="P:ribosomal small subunit biogenesis"/>
    <property type="evidence" value="ECO:0007669"/>
    <property type="project" value="TreeGrafter"/>
</dbReference>
<dbReference type="GO" id="GO:0006412">
    <property type="term" value="P:translation"/>
    <property type="evidence" value="ECO:0007669"/>
    <property type="project" value="UniProtKB-UniRule"/>
</dbReference>
<dbReference type="CDD" id="cd00165">
    <property type="entry name" value="S4"/>
    <property type="match status" value="1"/>
</dbReference>
<dbReference type="FunFam" id="1.10.1050.10:FF:000001">
    <property type="entry name" value="30S ribosomal protein S4"/>
    <property type="match status" value="1"/>
</dbReference>
<dbReference type="FunFam" id="3.10.290.10:FF:000001">
    <property type="entry name" value="30S ribosomal protein S4"/>
    <property type="match status" value="1"/>
</dbReference>
<dbReference type="Gene3D" id="1.10.1050.10">
    <property type="entry name" value="Ribosomal Protein S4 Delta 41, Chain A, domain 1"/>
    <property type="match status" value="1"/>
</dbReference>
<dbReference type="Gene3D" id="3.10.290.10">
    <property type="entry name" value="RNA-binding S4 domain"/>
    <property type="match status" value="1"/>
</dbReference>
<dbReference type="HAMAP" id="MF_01306_B">
    <property type="entry name" value="Ribosomal_uS4_B"/>
    <property type="match status" value="1"/>
</dbReference>
<dbReference type="InterPro" id="IPR022801">
    <property type="entry name" value="Ribosomal_uS4"/>
</dbReference>
<dbReference type="InterPro" id="IPR005709">
    <property type="entry name" value="Ribosomal_uS4_bac-type"/>
</dbReference>
<dbReference type="InterPro" id="IPR018079">
    <property type="entry name" value="Ribosomal_uS4_CS"/>
</dbReference>
<dbReference type="InterPro" id="IPR001912">
    <property type="entry name" value="Ribosomal_uS4_N"/>
</dbReference>
<dbReference type="InterPro" id="IPR002942">
    <property type="entry name" value="S4_RNA-bd"/>
</dbReference>
<dbReference type="InterPro" id="IPR036986">
    <property type="entry name" value="S4_RNA-bd_sf"/>
</dbReference>
<dbReference type="NCBIfam" id="NF003717">
    <property type="entry name" value="PRK05327.1"/>
    <property type="match status" value="1"/>
</dbReference>
<dbReference type="NCBIfam" id="TIGR01017">
    <property type="entry name" value="rpsD_bact"/>
    <property type="match status" value="1"/>
</dbReference>
<dbReference type="PANTHER" id="PTHR11831">
    <property type="entry name" value="30S 40S RIBOSOMAL PROTEIN"/>
    <property type="match status" value="1"/>
</dbReference>
<dbReference type="PANTHER" id="PTHR11831:SF4">
    <property type="entry name" value="SMALL RIBOSOMAL SUBUNIT PROTEIN US4M"/>
    <property type="match status" value="1"/>
</dbReference>
<dbReference type="Pfam" id="PF00163">
    <property type="entry name" value="Ribosomal_S4"/>
    <property type="match status" value="1"/>
</dbReference>
<dbReference type="Pfam" id="PF01479">
    <property type="entry name" value="S4"/>
    <property type="match status" value="1"/>
</dbReference>
<dbReference type="SMART" id="SM01390">
    <property type="entry name" value="Ribosomal_S4"/>
    <property type="match status" value="1"/>
</dbReference>
<dbReference type="SMART" id="SM00363">
    <property type="entry name" value="S4"/>
    <property type="match status" value="1"/>
</dbReference>
<dbReference type="SUPFAM" id="SSF55174">
    <property type="entry name" value="Alpha-L RNA-binding motif"/>
    <property type="match status" value="1"/>
</dbReference>
<dbReference type="PROSITE" id="PS00632">
    <property type="entry name" value="RIBOSOMAL_S4"/>
    <property type="match status" value="1"/>
</dbReference>
<dbReference type="PROSITE" id="PS50889">
    <property type="entry name" value="S4"/>
    <property type="match status" value="1"/>
</dbReference>
<organism>
    <name type="scientific">Coxiella burnetii (strain CbuK_Q154)</name>
    <name type="common">Coxiella burnetii (strain Q154)</name>
    <dbReference type="NCBI Taxonomy" id="434924"/>
    <lineage>
        <taxon>Bacteria</taxon>
        <taxon>Pseudomonadati</taxon>
        <taxon>Pseudomonadota</taxon>
        <taxon>Gammaproteobacteria</taxon>
        <taxon>Legionellales</taxon>
        <taxon>Coxiellaceae</taxon>
        <taxon>Coxiella</taxon>
    </lineage>
</organism>
<name>RS4_COXB1</name>